<protein>
    <recommendedName>
        <fullName>Mating-type protein MAT-2</fullName>
    </recommendedName>
</protein>
<accession>Q9P445</accession>
<sequence length="337" mass="37582">MDSTNSISLAEAVKIAEARFKAAVQGCKDDWHNGNDLVILQDNIPQLFGGILIEHFKHCVGEVSGFPVELTVMDSGNSNYHTLVQMPKNNMRLSQVASSPKSAKTSPSEQASINLRAVAAGLKKAPRPMNCWIIFRDAMHKHLRAEFPHLTIQEISTQCSQIWHNLSPEAKRPWQDAAQSAKEEHLRQHPNYKYTPRKPGEKKKRQSRKSKRAAATTTAPEVLQFQLSPNLIPTVPEVTDQPPLTANPVAATGDSPCPEDVLNYFDPNIFPEIYPQAPMAADFFYNAESIRHGLLDAEFDIDFNMDTTFALFDDEMLAFRDGADGDATLPSSFQDTY</sequence>
<feature type="chain" id="PRO_0000048592" description="Mating-type protein MAT-2">
    <location>
        <begin position="1"/>
        <end position="337"/>
    </location>
</feature>
<feature type="DNA-binding region" description="HMG box" evidence="1">
    <location>
        <begin position="125"/>
        <end position="193"/>
    </location>
</feature>
<feature type="region of interest" description="Disordered" evidence="2">
    <location>
        <begin position="171"/>
        <end position="219"/>
    </location>
</feature>
<feature type="compositionally biased region" description="Basic residues" evidence="2">
    <location>
        <begin position="200"/>
        <end position="212"/>
    </location>
</feature>
<dbReference type="EMBL" id="AF275374">
    <property type="protein sequence ID" value="AAF87724.1"/>
    <property type="molecule type" value="Genomic_DNA"/>
</dbReference>
<dbReference type="SMR" id="Q9P445"/>
<dbReference type="GO" id="GO:0005634">
    <property type="term" value="C:nucleus"/>
    <property type="evidence" value="ECO:0007669"/>
    <property type="project" value="UniProtKB-SubCell"/>
</dbReference>
<dbReference type="GO" id="GO:0001228">
    <property type="term" value="F:DNA-binding transcription activator activity, RNA polymerase II-specific"/>
    <property type="evidence" value="ECO:0007669"/>
    <property type="project" value="TreeGrafter"/>
</dbReference>
<dbReference type="GO" id="GO:0000978">
    <property type="term" value="F:RNA polymerase II cis-regulatory region sequence-specific DNA binding"/>
    <property type="evidence" value="ECO:0007669"/>
    <property type="project" value="TreeGrafter"/>
</dbReference>
<dbReference type="GO" id="GO:0030154">
    <property type="term" value="P:cell differentiation"/>
    <property type="evidence" value="ECO:0007669"/>
    <property type="project" value="TreeGrafter"/>
</dbReference>
<dbReference type="GO" id="GO:0007338">
    <property type="term" value="P:single fertilization"/>
    <property type="evidence" value="ECO:0007669"/>
    <property type="project" value="UniProtKB-KW"/>
</dbReference>
<dbReference type="CDD" id="cd01389">
    <property type="entry name" value="HMG-box_ROX1-like"/>
    <property type="match status" value="1"/>
</dbReference>
<dbReference type="Gene3D" id="1.10.30.10">
    <property type="entry name" value="High mobility group box domain"/>
    <property type="match status" value="1"/>
</dbReference>
<dbReference type="InterPro" id="IPR009071">
    <property type="entry name" value="HMG_box_dom"/>
</dbReference>
<dbReference type="InterPro" id="IPR036910">
    <property type="entry name" value="HMG_box_dom_sf"/>
</dbReference>
<dbReference type="InterPro" id="IPR050140">
    <property type="entry name" value="SRY-related_HMG-box_TF-like"/>
</dbReference>
<dbReference type="PANTHER" id="PTHR10270:SF161">
    <property type="entry name" value="SEX-DETERMINING REGION Y PROTEIN"/>
    <property type="match status" value="1"/>
</dbReference>
<dbReference type="PANTHER" id="PTHR10270">
    <property type="entry name" value="SOX TRANSCRIPTION FACTOR"/>
    <property type="match status" value="1"/>
</dbReference>
<dbReference type="Pfam" id="PF00505">
    <property type="entry name" value="HMG_box"/>
    <property type="match status" value="1"/>
</dbReference>
<dbReference type="SMART" id="SM00398">
    <property type="entry name" value="HMG"/>
    <property type="match status" value="1"/>
</dbReference>
<dbReference type="SUPFAM" id="SSF47095">
    <property type="entry name" value="HMG-box"/>
    <property type="match status" value="1"/>
</dbReference>
<dbReference type="PROSITE" id="PS50118">
    <property type="entry name" value="HMG_BOX_2"/>
    <property type="match status" value="1"/>
</dbReference>
<reference key="1">
    <citation type="submission" date="2000-06" db="EMBL/GenBank/DDBJ databases">
        <title>Genetic and molecular characterization of mating type genes in Cochliobolus sativus.</title>
        <authorList>
            <person name="Zhong S."/>
            <person name="Steffenson B.J."/>
        </authorList>
    </citation>
    <scope>NUCLEOTIDE SEQUENCE [GENOMIC DNA]</scope>
</reference>
<organism>
    <name type="scientific">Cochliobolus sativus</name>
    <name type="common">Common root rot and spot blotch fungus</name>
    <name type="synonym">Bipolaris sorokiniana</name>
    <dbReference type="NCBI Taxonomy" id="45130"/>
    <lineage>
        <taxon>Eukaryota</taxon>
        <taxon>Fungi</taxon>
        <taxon>Dikarya</taxon>
        <taxon>Ascomycota</taxon>
        <taxon>Pezizomycotina</taxon>
        <taxon>Dothideomycetes</taxon>
        <taxon>Pleosporomycetidae</taxon>
        <taxon>Pleosporales</taxon>
        <taxon>Pleosporineae</taxon>
        <taxon>Pleosporaceae</taxon>
        <taxon>Bipolaris</taxon>
    </lineage>
</organism>
<evidence type="ECO:0000255" key="1">
    <source>
        <dbReference type="PROSITE-ProRule" id="PRU00267"/>
    </source>
</evidence>
<evidence type="ECO:0000256" key="2">
    <source>
        <dbReference type="SAM" id="MobiDB-lite"/>
    </source>
</evidence>
<gene>
    <name type="primary">MAT2</name>
</gene>
<proteinExistence type="inferred from homology"/>
<keyword id="KW-0238">DNA-binding</keyword>
<keyword id="KW-0278">Fertilization</keyword>
<keyword id="KW-0539">Nucleus</keyword>
<keyword id="KW-0804">Transcription</keyword>
<keyword id="KW-0805">Transcription regulation</keyword>
<name>MAT2_COCSA</name>
<comment type="subcellular location">
    <subcellularLocation>
        <location evidence="1">Nucleus</location>
    </subcellularLocation>
</comment>